<evidence type="ECO:0000305" key="1"/>
<sequence length="37" mass="4005">ATDLQAGYVADSNFTEAWKKVVPNVDPPKTPSAFMXP</sequence>
<protein>
    <recommendedName>
        <fullName>ATP synthase subunit O, mitochondrial</fullName>
    </recommendedName>
    <alternativeName>
        <fullName>Oligomycin sensitivity conferral protein</fullName>
        <shortName>OSCP</shortName>
    </alternativeName>
</protein>
<dbReference type="STRING" id="4113.P80504"/>
<dbReference type="PaxDb" id="4113-PGSC0003DMT400030417"/>
<dbReference type="eggNOG" id="KOG1758">
    <property type="taxonomic scope" value="Eukaryota"/>
</dbReference>
<dbReference type="InParanoid" id="P80504"/>
<dbReference type="Proteomes" id="UP000011115">
    <property type="component" value="Unassembled WGS sequence"/>
</dbReference>
<dbReference type="GO" id="GO:0005743">
    <property type="term" value="C:mitochondrial inner membrane"/>
    <property type="evidence" value="ECO:0007669"/>
    <property type="project" value="UniProtKB-SubCell"/>
</dbReference>
<dbReference type="GO" id="GO:0006754">
    <property type="term" value="P:ATP biosynthetic process"/>
    <property type="evidence" value="ECO:0007669"/>
    <property type="project" value="UniProtKB-KW"/>
</dbReference>
<dbReference type="GO" id="GO:1902600">
    <property type="term" value="P:proton transmembrane transport"/>
    <property type="evidence" value="ECO:0007669"/>
    <property type="project" value="UniProtKB-KW"/>
</dbReference>
<comment type="function">
    <text>Mitochondrial membrane ATP synthase (F(1)F(0) ATP synthase or Complex V) produces ATP from ADP in the presence of a proton gradient across the membrane which is generated by electron transport complexes of the respiratory chain. F-type ATPases consist of two structural domains, F(1) - containing the extramembraneous catalytic core and F(0) - containing the membrane proton channel, linked together by a central stalk and a peripheral stalk. During catalysis, ATP synthesis in the catalytic domain of F(1) is coupled via a rotary mechanism of the central stalk subunits to proton translocation. Part of the complex F(0) domain and the peripheric stalk, which acts as a stator to hold the catalytic alpha(3)beta(3) subcomplex and subunit a/ATP6 static relative to the rotary elements.</text>
</comment>
<comment type="subunit">
    <text>F-type ATPases have 2 components, CF(1) - the catalytic core - and CF(0) - the membrane proton channel. CF(1) has five subunits: alpha(3), beta(3), gamma(1), delta(1), epsilon(1). CF(0) has three main subunits: a, b and c.</text>
</comment>
<comment type="subcellular location">
    <subcellularLocation>
        <location>Mitochondrion</location>
    </subcellularLocation>
    <subcellularLocation>
        <location>Mitochondrion inner membrane</location>
    </subcellularLocation>
</comment>
<comment type="similarity">
    <text evidence="1">Belongs to the ATPase delta chain family.</text>
</comment>
<keyword id="KW-0066">ATP synthesis</keyword>
<keyword id="KW-0903">Direct protein sequencing</keyword>
<keyword id="KW-0375">Hydrogen ion transport</keyword>
<keyword id="KW-0406">Ion transport</keyword>
<keyword id="KW-0472">Membrane</keyword>
<keyword id="KW-0496">Mitochondrion</keyword>
<keyword id="KW-0999">Mitochondrion inner membrane</keyword>
<keyword id="KW-1185">Reference proteome</keyword>
<keyword id="KW-0813">Transport</keyword>
<feature type="chain" id="PRO_0000193507" description="ATP synthase subunit O, mitochondrial">
    <location>
        <begin position="1"/>
        <end position="37" status="greater than"/>
    </location>
</feature>
<feature type="non-terminal residue">
    <location>
        <position position="37"/>
    </location>
</feature>
<name>ATPO_SOLTU</name>
<accession>P80504</accession>
<proteinExistence type="evidence at protein level"/>
<reference key="1">
    <citation type="journal article" date="1996" name="Plant J.">
        <title>New insights into the composition, molecular mass and stoichiometry of the protein complexes of plant mitochondria.</title>
        <authorList>
            <person name="Jansch L."/>
            <person name="Kruft V."/>
            <person name="Schmitz U.K."/>
            <person name="Braun H.P."/>
        </authorList>
    </citation>
    <scope>PROTEIN SEQUENCE</scope>
    <source>
        <tissue>Tuber</tissue>
    </source>
</reference>
<organism>
    <name type="scientific">Solanum tuberosum</name>
    <name type="common">Potato</name>
    <dbReference type="NCBI Taxonomy" id="4113"/>
    <lineage>
        <taxon>Eukaryota</taxon>
        <taxon>Viridiplantae</taxon>
        <taxon>Streptophyta</taxon>
        <taxon>Embryophyta</taxon>
        <taxon>Tracheophyta</taxon>
        <taxon>Spermatophyta</taxon>
        <taxon>Magnoliopsida</taxon>
        <taxon>eudicotyledons</taxon>
        <taxon>Gunneridae</taxon>
        <taxon>Pentapetalae</taxon>
        <taxon>asterids</taxon>
        <taxon>lamiids</taxon>
        <taxon>Solanales</taxon>
        <taxon>Solanaceae</taxon>
        <taxon>Solanoideae</taxon>
        <taxon>Solaneae</taxon>
        <taxon>Solanum</taxon>
    </lineage>
</organism>